<gene>
    <name evidence="2" type="primary">mutM</name>
    <name evidence="2" type="synonym">fpg</name>
    <name type="ordered locus">RALTA_A0321</name>
</gene>
<proteinExistence type="inferred from homology"/>
<comment type="function">
    <text evidence="2">Involved in base excision repair of DNA damaged by oxidation or by mutagenic agents. Acts as a DNA glycosylase that recognizes and removes damaged bases. Has a preference for oxidized purines, such as 7,8-dihydro-8-oxoguanine (8-oxoG). Has AP (apurinic/apyrimidinic) lyase activity and introduces nicks in the DNA strand. Cleaves the DNA backbone by beta-delta elimination to generate a single-strand break at the site of the removed base with both 3'- and 5'-phosphates.</text>
</comment>
<comment type="catalytic activity">
    <reaction evidence="2">
        <text>Hydrolysis of DNA containing ring-opened 7-methylguanine residues, releasing 2,6-diamino-4-hydroxy-5-(N-methyl)formamidopyrimidine.</text>
        <dbReference type="EC" id="3.2.2.23"/>
    </reaction>
</comment>
<comment type="catalytic activity">
    <reaction evidence="2">
        <text>2'-deoxyribonucleotide-(2'-deoxyribose 5'-phosphate)-2'-deoxyribonucleotide-DNA = a 3'-end 2'-deoxyribonucleotide-(2,3-dehydro-2,3-deoxyribose 5'-phosphate)-DNA + a 5'-end 5'-phospho-2'-deoxyribonucleoside-DNA + H(+)</text>
        <dbReference type="Rhea" id="RHEA:66592"/>
        <dbReference type="Rhea" id="RHEA-COMP:13180"/>
        <dbReference type="Rhea" id="RHEA-COMP:16897"/>
        <dbReference type="Rhea" id="RHEA-COMP:17067"/>
        <dbReference type="ChEBI" id="CHEBI:15378"/>
        <dbReference type="ChEBI" id="CHEBI:136412"/>
        <dbReference type="ChEBI" id="CHEBI:157695"/>
        <dbReference type="ChEBI" id="CHEBI:167181"/>
        <dbReference type="EC" id="4.2.99.18"/>
    </reaction>
</comment>
<comment type="cofactor">
    <cofactor evidence="2">
        <name>Zn(2+)</name>
        <dbReference type="ChEBI" id="CHEBI:29105"/>
    </cofactor>
    <text evidence="2">Binds 1 zinc ion per subunit.</text>
</comment>
<comment type="subunit">
    <text evidence="2">Monomer.</text>
</comment>
<comment type="similarity">
    <text evidence="2">Belongs to the FPG family.</text>
</comment>
<accession>B2AGU2</accession>
<protein>
    <recommendedName>
        <fullName evidence="2">Formamidopyrimidine-DNA glycosylase</fullName>
        <shortName evidence="2">Fapy-DNA glycosylase</shortName>
        <ecNumber evidence="2">3.2.2.23</ecNumber>
    </recommendedName>
    <alternativeName>
        <fullName evidence="2">DNA-(apurinic or apyrimidinic site) lyase MutM</fullName>
        <shortName evidence="2">AP lyase MutM</shortName>
        <ecNumber evidence="2">4.2.99.18</ecNumber>
    </alternativeName>
</protein>
<name>FPG_CUPTR</name>
<reference key="1">
    <citation type="journal article" date="2008" name="Genome Res.">
        <title>Genome sequence of the beta-rhizobium Cupriavidus taiwanensis and comparative genomics of rhizobia.</title>
        <authorList>
            <person name="Amadou C."/>
            <person name="Pascal G."/>
            <person name="Mangenot S."/>
            <person name="Glew M."/>
            <person name="Bontemps C."/>
            <person name="Capela D."/>
            <person name="Carrere S."/>
            <person name="Cruveiller S."/>
            <person name="Dossat C."/>
            <person name="Lajus A."/>
            <person name="Marchetti M."/>
            <person name="Poinsot V."/>
            <person name="Rouy Z."/>
            <person name="Servin B."/>
            <person name="Saad M."/>
            <person name="Schenowitz C."/>
            <person name="Barbe V."/>
            <person name="Batut J."/>
            <person name="Medigue C."/>
            <person name="Masson-Boivin C."/>
        </authorList>
    </citation>
    <scope>NUCLEOTIDE SEQUENCE [LARGE SCALE GENOMIC DNA]</scope>
    <source>
        <strain>DSM 17343 / BCRC 17206 / CCUG 44338 / CIP 107171 / LMG 19424 / R1</strain>
    </source>
</reference>
<dbReference type="EC" id="3.2.2.23" evidence="2"/>
<dbReference type="EC" id="4.2.99.18" evidence="2"/>
<dbReference type="EMBL" id="CU633749">
    <property type="protein sequence ID" value="CAP62991.1"/>
    <property type="molecule type" value="Genomic_DNA"/>
</dbReference>
<dbReference type="RefSeq" id="WP_012351658.1">
    <property type="nucleotide sequence ID" value="NC_010528.1"/>
</dbReference>
<dbReference type="SMR" id="B2AGU2"/>
<dbReference type="GeneID" id="29762448"/>
<dbReference type="KEGG" id="cti:RALTA_A0321"/>
<dbReference type="eggNOG" id="COG0266">
    <property type="taxonomic scope" value="Bacteria"/>
</dbReference>
<dbReference type="HOGENOM" id="CLU_038423_1_1_4"/>
<dbReference type="BioCyc" id="CTAI977880:RALTA_RS01570-MONOMER"/>
<dbReference type="Proteomes" id="UP000001692">
    <property type="component" value="Chromosome 1"/>
</dbReference>
<dbReference type="GO" id="GO:0034039">
    <property type="term" value="F:8-oxo-7,8-dihydroguanine DNA N-glycosylase activity"/>
    <property type="evidence" value="ECO:0007669"/>
    <property type="project" value="TreeGrafter"/>
</dbReference>
<dbReference type="GO" id="GO:0140078">
    <property type="term" value="F:class I DNA-(apurinic or apyrimidinic site) endonuclease activity"/>
    <property type="evidence" value="ECO:0007669"/>
    <property type="project" value="UniProtKB-EC"/>
</dbReference>
<dbReference type="GO" id="GO:0003684">
    <property type="term" value="F:damaged DNA binding"/>
    <property type="evidence" value="ECO:0007669"/>
    <property type="project" value="InterPro"/>
</dbReference>
<dbReference type="GO" id="GO:0008270">
    <property type="term" value="F:zinc ion binding"/>
    <property type="evidence" value="ECO:0007669"/>
    <property type="project" value="UniProtKB-UniRule"/>
</dbReference>
<dbReference type="GO" id="GO:0006284">
    <property type="term" value="P:base-excision repair"/>
    <property type="evidence" value="ECO:0007669"/>
    <property type="project" value="InterPro"/>
</dbReference>
<dbReference type="CDD" id="cd08966">
    <property type="entry name" value="EcFpg-like_N"/>
    <property type="match status" value="1"/>
</dbReference>
<dbReference type="FunFam" id="1.10.8.50:FF:000003">
    <property type="entry name" value="Formamidopyrimidine-DNA glycosylase"/>
    <property type="match status" value="1"/>
</dbReference>
<dbReference type="Gene3D" id="1.10.8.50">
    <property type="match status" value="1"/>
</dbReference>
<dbReference type="Gene3D" id="3.20.190.10">
    <property type="entry name" value="MutM-like, N-terminal"/>
    <property type="match status" value="1"/>
</dbReference>
<dbReference type="HAMAP" id="MF_00103">
    <property type="entry name" value="Fapy_DNA_glycosyl"/>
    <property type="match status" value="1"/>
</dbReference>
<dbReference type="InterPro" id="IPR015886">
    <property type="entry name" value="DNA_glyclase/AP_lyase_DNA-bd"/>
</dbReference>
<dbReference type="InterPro" id="IPR015887">
    <property type="entry name" value="DNA_glyclase_Znf_dom_DNA_BS"/>
</dbReference>
<dbReference type="InterPro" id="IPR020629">
    <property type="entry name" value="Formamido-pyr_DNA_Glyclase"/>
</dbReference>
<dbReference type="InterPro" id="IPR012319">
    <property type="entry name" value="FPG_cat"/>
</dbReference>
<dbReference type="InterPro" id="IPR035937">
    <property type="entry name" value="MutM-like_N-ter"/>
</dbReference>
<dbReference type="InterPro" id="IPR010979">
    <property type="entry name" value="Ribosomal_uS13-like_H2TH"/>
</dbReference>
<dbReference type="InterPro" id="IPR000214">
    <property type="entry name" value="Znf_DNA_glyclase/AP_lyase"/>
</dbReference>
<dbReference type="InterPro" id="IPR010663">
    <property type="entry name" value="Znf_FPG/IleRS"/>
</dbReference>
<dbReference type="NCBIfam" id="TIGR00577">
    <property type="entry name" value="fpg"/>
    <property type="match status" value="1"/>
</dbReference>
<dbReference type="NCBIfam" id="NF002211">
    <property type="entry name" value="PRK01103.1"/>
    <property type="match status" value="1"/>
</dbReference>
<dbReference type="PANTHER" id="PTHR22993">
    <property type="entry name" value="FORMAMIDOPYRIMIDINE-DNA GLYCOSYLASE"/>
    <property type="match status" value="1"/>
</dbReference>
<dbReference type="PANTHER" id="PTHR22993:SF9">
    <property type="entry name" value="FORMAMIDOPYRIMIDINE-DNA GLYCOSYLASE"/>
    <property type="match status" value="1"/>
</dbReference>
<dbReference type="Pfam" id="PF01149">
    <property type="entry name" value="Fapy_DNA_glyco"/>
    <property type="match status" value="1"/>
</dbReference>
<dbReference type="Pfam" id="PF06831">
    <property type="entry name" value="H2TH"/>
    <property type="match status" value="1"/>
</dbReference>
<dbReference type="Pfam" id="PF06827">
    <property type="entry name" value="zf-FPG_IleRS"/>
    <property type="match status" value="1"/>
</dbReference>
<dbReference type="SMART" id="SM00898">
    <property type="entry name" value="Fapy_DNA_glyco"/>
    <property type="match status" value="1"/>
</dbReference>
<dbReference type="SMART" id="SM01232">
    <property type="entry name" value="H2TH"/>
    <property type="match status" value="1"/>
</dbReference>
<dbReference type="SUPFAM" id="SSF57716">
    <property type="entry name" value="Glucocorticoid receptor-like (DNA-binding domain)"/>
    <property type="match status" value="1"/>
</dbReference>
<dbReference type="SUPFAM" id="SSF81624">
    <property type="entry name" value="N-terminal domain of MutM-like DNA repair proteins"/>
    <property type="match status" value="1"/>
</dbReference>
<dbReference type="SUPFAM" id="SSF46946">
    <property type="entry name" value="S13-like H2TH domain"/>
    <property type="match status" value="1"/>
</dbReference>
<dbReference type="PROSITE" id="PS51068">
    <property type="entry name" value="FPG_CAT"/>
    <property type="match status" value="1"/>
</dbReference>
<dbReference type="PROSITE" id="PS01242">
    <property type="entry name" value="ZF_FPG_1"/>
    <property type="match status" value="1"/>
</dbReference>
<dbReference type="PROSITE" id="PS51066">
    <property type="entry name" value="ZF_FPG_2"/>
    <property type="match status" value="1"/>
</dbReference>
<sequence length="290" mass="31782">MPELPEVEVTRRGLLPHVVGRRIAAVTVRHRGLRWPVDPGLEACLAHRLVRRIERRGKYLLLECISADAAQPPGWLLVHLGMTGTLRVLPEAPPPGMHDHFDLLLDAGPAPGMLADTIVLRFRDPRRFGAILWTTLPEAELASHPLLSTLGIEPFDPAFDGAWLHRHTRGRSAAIKTVLLSGAIVVGVGNIYASESLFRAGIRPTTAAGRLSRARCDRLAQAVRDTLAQAIERGGSTLRDFVGSDGASGYFQLDCFVYDRAGLPCRVCATPVRQIVQGQRSTFYCPKCQH</sequence>
<keyword id="KW-0227">DNA damage</keyword>
<keyword id="KW-0234">DNA repair</keyword>
<keyword id="KW-0238">DNA-binding</keyword>
<keyword id="KW-0326">Glycosidase</keyword>
<keyword id="KW-0378">Hydrolase</keyword>
<keyword id="KW-0456">Lyase</keyword>
<keyword id="KW-0479">Metal-binding</keyword>
<keyword id="KW-0511">Multifunctional enzyme</keyword>
<keyword id="KW-0862">Zinc</keyword>
<keyword id="KW-0863">Zinc-finger</keyword>
<feature type="initiator methionine" description="Removed" evidence="1">
    <location>
        <position position="1"/>
    </location>
</feature>
<feature type="chain" id="PRO_1000094040" description="Formamidopyrimidine-DNA glycosylase">
    <location>
        <begin position="2"/>
        <end position="290"/>
    </location>
</feature>
<feature type="zinc finger region" description="FPG-type" evidence="2">
    <location>
        <begin position="256"/>
        <end position="290"/>
    </location>
</feature>
<feature type="active site" description="Schiff-base intermediate with DNA" evidence="2">
    <location>
        <position position="2"/>
    </location>
</feature>
<feature type="active site" description="Proton donor" evidence="2">
    <location>
        <position position="3"/>
    </location>
</feature>
<feature type="active site" description="Proton donor; for beta-elimination activity" evidence="2">
    <location>
        <position position="58"/>
    </location>
</feature>
<feature type="active site" description="Proton donor; for delta-elimination activity" evidence="2">
    <location>
        <position position="280"/>
    </location>
</feature>
<feature type="binding site" evidence="2">
    <location>
        <position position="98"/>
    </location>
    <ligand>
        <name>DNA</name>
        <dbReference type="ChEBI" id="CHEBI:16991"/>
    </ligand>
</feature>
<feature type="binding site" evidence="2">
    <location>
        <position position="126"/>
    </location>
    <ligand>
        <name>DNA</name>
        <dbReference type="ChEBI" id="CHEBI:16991"/>
    </ligand>
</feature>
<feature type="binding site" evidence="2">
    <location>
        <position position="171"/>
    </location>
    <ligand>
        <name>DNA</name>
        <dbReference type="ChEBI" id="CHEBI:16991"/>
    </ligand>
</feature>
<organism>
    <name type="scientific">Cupriavidus taiwanensis (strain DSM 17343 / BCRC 17206 / CCUG 44338 / CIP 107171 / LMG 19424 / R1)</name>
    <name type="common">Ralstonia taiwanensis (strain LMG 19424)</name>
    <dbReference type="NCBI Taxonomy" id="977880"/>
    <lineage>
        <taxon>Bacteria</taxon>
        <taxon>Pseudomonadati</taxon>
        <taxon>Pseudomonadota</taxon>
        <taxon>Betaproteobacteria</taxon>
        <taxon>Burkholderiales</taxon>
        <taxon>Burkholderiaceae</taxon>
        <taxon>Cupriavidus</taxon>
    </lineage>
</organism>
<evidence type="ECO:0000250" key="1"/>
<evidence type="ECO:0000255" key="2">
    <source>
        <dbReference type="HAMAP-Rule" id="MF_00103"/>
    </source>
</evidence>